<feature type="chain" id="PRO_0000049902" description="Uncharacterized protein YtvB">
    <location>
        <begin position="1"/>
        <end position="111"/>
    </location>
</feature>
<feature type="transmembrane region" description="Helical" evidence="1">
    <location>
        <begin position="4"/>
        <end position="23"/>
    </location>
</feature>
<feature type="transmembrane region" description="Helical" evidence="1">
    <location>
        <begin position="39"/>
        <end position="61"/>
    </location>
</feature>
<feature type="transmembrane region" description="Helical" evidence="1">
    <location>
        <begin position="65"/>
        <end position="84"/>
    </location>
</feature>
<dbReference type="EMBL" id="AF008220">
    <property type="protein sequence ID" value="AAC00258.1"/>
    <property type="molecule type" value="Genomic_DNA"/>
</dbReference>
<dbReference type="EMBL" id="AL009126">
    <property type="protein sequence ID" value="CAB15011.3"/>
    <property type="molecule type" value="Genomic_DNA"/>
</dbReference>
<dbReference type="PIR" id="B70002">
    <property type="entry name" value="B70002"/>
</dbReference>
<dbReference type="RefSeq" id="NP_390911.3">
    <property type="nucleotide sequence ID" value="NC_000964.3"/>
</dbReference>
<dbReference type="RefSeq" id="WP_003246114.1">
    <property type="nucleotide sequence ID" value="NZ_OZ025638.1"/>
</dbReference>
<dbReference type="FunCoup" id="O34881">
    <property type="interactions" value="193"/>
</dbReference>
<dbReference type="STRING" id="224308.BSU30330"/>
<dbReference type="PaxDb" id="224308-BSU30330"/>
<dbReference type="EnsemblBacteria" id="CAB15011">
    <property type="protein sequence ID" value="CAB15011"/>
    <property type="gene ID" value="BSU_30330"/>
</dbReference>
<dbReference type="GeneID" id="937249"/>
<dbReference type="KEGG" id="bsu:BSU30330"/>
<dbReference type="eggNOG" id="ENOG502ZJVM">
    <property type="taxonomic scope" value="Bacteria"/>
</dbReference>
<dbReference type="InParanoid" id="O34881"/>
<dbReference type="OrthoDB" id="2898699at2"/>
<dbReference type="BioCyc" id="BSUB:BSU30330-MONOMER"/>
<dbReference type="Proteomes" id="UP000001570">
    <property type="component" value="Chromosome"/>
</dbReference>
<dbReference type="GO" id="GO:0005886">
    <property type="term" value="C:plasma membrane"/>
    <property type="evidence" value="ECO:0007669"/>
    <property type="project" value="UniProtKB-SubCell"/>
</dbReference>
<dbReference type="InterPro" id="IPR025353">
    <property type="entry name" value="DUF4257"/>
</dbReference>
<dbReference type="Pfam" id="PF14074">
    <property type="entry name" value="DUF4257"/>
    <property type="match status" value="1"/>
</dbReference>
<organism>
    <name type="scientific">Bacillus subtilis (strain 168)</name>
    <dbReference type="NCBI Taxonomy" id="224308"/>
    <lineage>
        <taxon>Bacteria</taxon>
        <taxon>Bacillati</taxon>
        <taxon>Bacillota</taxon>
        <taxon>Bacilli</taxon>
        <taxon>Bacillales</taxon>
        <taxon>Bacillaceae</taxon>
        <taxon>Bacillus</taxon>
    </lineage>
</organism>
<proteinExistence type="predicted"/>
<protein>
    <recommendedName>
        <fullName>Uncharacterized protein YtvB</fullName>
    </recommendedName>
</protein>
<reference key="1">
    <citation type="journal article" date="1997" name="Microbiology">
        <title>Sequencing and functional annotation of the Bacillus subtilis genes in the 200 kb rrnB-dnaB region.</title>
        <authorList>
            <person name="Lapidus A."/>
            <person name="Galleron N."/>
            <person name="Sorokin A."/>
            <person name="Ehrlich S.D."/>
        </authorList>
    </citation>
    <scope>NUCLEOTIDE SEQUENCE [GENOMIC DNA]</scope>
    <source>
        <strain>168</strain>
    </source>
</reference>
<reference key="2">
    <citation type="journal article" date="1997" name="Nature">
        <title>The complete genome sequence of the Gram-positive bacterium Bacillus subtilis.</title>
        <authorList>
            <person name="Kunst F."/>
            <person name="Ogasawara N."/>
            <person name="Moszer I."/>
            <person name="Albertini A.M."/>
            <person name="Alloni G."/>
            <person name="Azevedo V."/>
            <person name="Bertero M.G."/>
            <person name="Bessieres P."/>
            <person name="Bolotin A."/>
            <person name="Borchert S."/>
            <person name="Borriss R."/>
            <person name="Boursier L."/>
            <person name="Brans A."/>
            <person name="Braun M."/>
            <person name="Brignell S.C."/>
            <person name="Bron S."/>
            <person name="Brouillet S."/>
            <person name="Bruschi C.V."/>
            <person name="Caldwell B."/>
            <person name="Capuano V."/>
            <person name="Carter N.M."/>
            <person name="Choi S.-K."/>
            <person name="Codani J.-J."/>
            <person name="Connerton I.F."/>
            <person name="Cummings N.J."/>
            <person name="Daniel R.A."/>
            <person name="Denizot F."/>
            <person name="Devine K.M."/>
            <person name="Duesterhoeft A."/>
            <person name="Ehrlich S.D."/>
            <person name="Emmerson P.T."/>
            <person name="Entian K.-D."/>
            <person name="Errington J."/>
            <person name="Fabret C."/>
            <person name="Ferrari E."/>
            <person name="Foulger D."/>
            <person name="Fritz C."/>
            <person name="Fujita M."/>
            <person name="Fujita Y."/>
            <person name="Fuma S."/>
            <person name="Galizzi A."/>
            <person name="Galleron N."/>
            <person name="Ghim S.-Y."/>
            <person name="Glaser P."/>
            <person name="Goffeau A."/>
            <person name="Golightly E.J."/>
            <person name="Grandi G."/>
            <person name="Guiseppi G."/>
            <person name="Guy B.J."/>
            <person name="Haga K."/>
            <person name="Haiech J."/>
            <person name="Harwood C.R."/>
            <person name="Henaut A."/>
            <person name="Hilbert H."/>
            <person name="Holsappel S."/>
            <person name="Hosono S."/>
            <person name="Hullo M.-F."/>
            <person name="Itaya M."/>
            <person name="Jones L.-M."/>
            <person name="Joris B."/>
            <person name="Karamata D."/>
            <person name="Kasahara Y."/>
            <person name="Klaerr-Blanchard M."/>
            <person name="Klein C."/>
            <person name="Kobayashi Y."/>
            <person name="Koetter P."/>
            <person name="Koningstein G."/>
            <person name="Krogh S."/>
            <person name="Kumano M."/>
            <person name="Kurita K."/>
            <person name="Lapidus A."/>
            <person name="Lardinois S."/>
            <person name="Lauber J."/>
            <person name="Lazarevic V."/>
            <person name="Lee S.-M."/>
            <person name="Levine A."/>
            <person name="Liu H."/>
            <person name="Masuda S."/>
            <person name="Mauel C."/>
            <person name="Medigue C."/>
            <person name="Medina N."/>
            <person name="Mellado R.P."/>
            <person name="Mizuno M."/>
            <person name="Moestl D."/>
            <person name="Nakai S."/>
            <person name="Noback M."/>
            <person name="Noone D."/>
            <person name="O'Reilly M."/>
            <person name="Ogawa K."/>
            <person name="Ogiwara A."/>
            <person name="Oudega B."/>
            <person name="Park S.-H."/>
            <person name="Parro V."/>
            <person name="Pohl T.M."/>
            <person name="Portetelle D."/>
            <person name="Porwollik S."/>
            <person name="Prescott A.M."/>
            <person name="Presecan E."/>
            <person name="Pujic P."/>
            <person name="Purnelle B."/>
            <person name="Rapoport G."/>
            <person name="Rey M."/>
            <person name="Reynolds S."/>
            <person name="Rieger M."/>
            <person name="Rivolta C."/>
            <person name="Rocha E."/>
            <person name="Roche B."/>
            <person name="Rose M."/>
            <person name="Sadaie Y."/>
            <person name="Sato T."/>
            <person name="Scanlan E."/>
            <person name="Schleich S."/>
            <person name="Schroeter R."/>
            <person name="Scoffone F."/>
            <person name="Sekiguchi J."/>
            <person name="Sekowska A."/>
            <person name="Seror S.J."/>
            <person name="Serror P."/>
            <person name="Shin B.-S."/>
            <person name="Soldo B."/>
            <person name="Sorokin A."/>
            <person name="Tacconi E."/>
            <person name="Takagi T."/>
            <person name="Takahashi H."/>
            <person name="Takemaru K."/>
            <person name="Takeuchi M."/>
            <person name="Tamakoshi A."/>
            <person name="Tanaka T."/>
            <person name="Terpstra P."/>
            <person name="Tognoni A."/>
            <person name="Tosato V."/>
            <person name="Uchiyama S."/>
            <person name="Vandenbol M."/>
            <person name="Vannier F."/>
            <person name="Vassarotti A."/>
            <person name="Viari A."/>
            <person name="Wambutt R."/>
            <person name="Wedler E."/>
            <person name="Wedler H."/>
            <person name="Weitzenegger T."/>
            <person name="Winters P."/>
            <person name="Wipat A."/>
            <person name="Yamamoto H."/>
            <person name="Yamane K."/>
            <person name="Yasumoto K."/>
            <person name="Yata K."/>
            <person name="Yoshida K."/>
            <person name="Yoshikawa H.-F."/>
            <person name="Zumstein E."/>
            <person name="Yoshikawa H."/>
            <person name="Danchin A."/>
        </authorList>
    </citation>
    <scope>NUCLEOTIDE SEQUENCE [LARGE SCALE GENOMIC DNA]</scope>
    <source>
        <strain>168</strain>
    </source>
</reference>
<sequence length="111" mass="12246">MKMLHQVLIACVIGGIMGILGHVKKRGRLEKPRMTKRFIYLGFLEDWFIGMTASILLVLSADPDSGIQLVILSIISGYGGEAVLRSFDFVRELNSGGEPAESKRQTKTPPE</sequence>
<accession>O34881</accession>
<name>YTVB_BACSU</name>
<keyword id="KW-1003">Cell membrane</keyword>
<keyword id="KW-0472">Membrane</keyword>
<keyword id="KW-1185">Reference proteome</keyword>
<keyword id="KW-0812">Transmembrane</keyword>
<keyword id="KW-1133">Transmembrane helix</keyword>
<evidence type="ECO:0000255" key="1"/>
<evidence type="ECO:0000305" key="2"/>
<comment type="subcellular location">
    <subcellularLocation>
        <location evidence="2">Cell membrane</location>
        <topology evidence="2">Multi-pass membrane protein</topology>
    </subcellularLocation>
</comment>
<gene>
    <name type="primary">ytvB</name>
    <name type="ordered locus">BSU30330</name>
</gene>